<reference key="1">
    <citation type="journal article" date="2007" name="J. Bacteriol.">
        <title>Genome of the opportunistic pathogen Streptococcus sanguinis.</title>
        <authorList>
            <person name="Xu P."/>
            <person name="Alves J.M."/>
            <person name="Kitten T."/>
            <person name="Brown A."/>
            <person name="Chen Z."/>
            <person name="Ozaki L.S."/>
            <person name="Manque P."/>
            <person name="Ge X."/>
            <person name="Serrano M.G."/>
            <person name="Puiu D."/>
            <person name="Hendricks S."/>
            <person name="Wang Y."/>
            <person name="Chaplin M.D."/>
            <person name="Akan D."/>
            <person name="Paik S."/>
            <person name="Peterson D.L."/>
            <person name="Macrina F.L."/>
            <person name="Buck G.A."/>
        </authorList>
    </citation>
    <scope>NUCLEOTIDE SEQUENCE [LARGE SCALE GENOMIC DNA]</scope>
    <source>
        <strain>SK36</strain>
    </source>
</reference>
<evidence type="ECO:0000255" key="1">
    <source>
        <dbReference type="HAMAP-Rule" id="MF_01013"/>
    </source>
</evidence>
<comment type="function">
    <text evidence="1">IGPS catalyzes the conversion of PRFAR and glutamine to IGP, AICAR and glutamate. The HisF subunit catalyzes the cyclization activity that produces IGP and AICAR from PRFAR using the ammonia provided by the HisH subunit.</text>
</comment>
<comment type="catalytic activity">
    <reaction evidence="1">
        <text>5-[(5-phospho-1-deoxy-D-ribulos-1-ylimino)methylamino]-1-(5-phospho-beta-D-ribosyl)imidazole-4-carboxamide + L-glutamine = D-erythro-1-(imidazol-4-yl)glycerol 3-phosphate + 5-amino-1-(5-phospho-beta-D-ribosyl)imidazole-4-carboxamide + L-glutamate + H(+)</text>
        <dbReference type="Rhea" id="RHEA:24793"/>
        <dbReference type="ChEBI" id="CHEBI:15378"/>
        <dbReference type="ChEBI" id="CHEBI:29985"/>
        <dbReference type="ChEBI" id="CHEBI:58278"/>
        <dbReference type="ChEBI" id="CHEBI:58359"/>
        <dbReference type="ChEBI" id="CHEBI:58475"/>
        <dbReference type="ChEBI" id="CHEBI:58525"/>
        <dbReference type="EC" id="4.3.2.10"/>
    </reaction>
</comment>
<comment type="pathway">
    <text evidence="1">Amino-acid biosynthesis; L-histidine biosynthesis; L-histidine from 5-phospho-alpha-D-ribose 1-diphosphate: step 5/9.</text>
</comment>
<comment type="subunit">
    <text evidence="1">Heterodimer of HisH and HisF.</text>
</comment>
<comment type="subcellular location">
    <subcellularLocation>
        <location evidence="1">Cytoplasm</location>
    </subcellularLocation>
</comment>
<comment type="similarity">
    <text evidence="1">Belongs to the HisA/HisF family.</text>
</comment>
<feature type="chain" id="PRO_1000063161" description="Imidazole glycerol phosphate synthase subunit HisF">
    <location>
        <begin position="1"/>
        <end position="252"/>
    </location>
</feature>
<feature type="active site" evidence="1">
    <location>
        <position position="11"/>
    </location>
</feature>
<feature type="active site" evidence="1">
    <location>
        <position position="130"/>
    </location>
</feature>
<protein>
    <recommendedName>
        <fullName evidence="1">Imidazole glycerol phosphate synthase subunit HisF</fullName>
        <ecNumber evidence="1">4.3.2.10</ecNumber>
    </recommendedName>
    <alternativeName>
        <fullName evidence="1">IGP synthase cyclase subunit</fullName>
    </alternativeName>
    <alternativeName>
        <fullName evidence="1">IGP synthase subunit HisF</fullName>
    </alternativeName>
    <alternativeName>
        <fullName evidence="1">ImGP synthase subunit HisF</fullName>
        <shortName evidence="1">IGPS subunit HisF</shortName>
    </alternativeName>
</protein>
<sequence length="252" mass="26816">MLKKRIIPCLDVKDGRVVKGINFVNLTDVGDPVDAAKAYYEAGCDELVFLDITATHEERDTTVEMVRRVAEQVFIPFTVGGGIRTVEDMKRMLQAGADKVAVNSSALANPQLLADCAEKFGSQCVVLAVDAKKEADGSWHVYLAGGRKDSGRDLLDWVQEAVSLGAGEILLTSMDKDGTKSGFDLPMLEAVSQVVSVPIIASGGAGSSQHILEVFEKTAATGALAASIFHYGQVSIAETKKAMQAAGLEVRI</sequence>
<name>HIS6_STRSV</name>
<proteinExistence type="inferred from homology"/>
<keyword id="KW-0028">Amino-acid biosynthesis</keyword>
<keyword id="KW-0963">Cytoplasm</keyword>
<keyword id="KW-0368">Histidine biosynthesis</keyword>
<keyword id="KW-0456">Lyase</keyword>
<keyword id="KW-1185">Reference proteome</keyword>
<gene>
    <name evidence="1" type="primary">hisF</name>
    <name type="ordered locus">SSA_1442</name>
</gene>
<accession>A3CNT0</accession>
<organism>
    <name type="scientific">Streptococcus sanguinis (strain SK36)</name>
    <dbReference type="NCBI Taxonomy" id="388919"/>
    <lineage>
        <taxon>Bacteria</taxon>
        <taxon>Bacillati</taxon>
        <taxon>Bacillota</taxon>
        <taxon>Bacilli</taxon>
        <taxon>Lactobacillales</taxon>
        <taxon>Streptococcaceae</taxon>
        <taxon>Streptococcus</taxon>
    </lineage>
</organism>
<dbReference type="EC" id="4.3.2.10" evidence="1"/>
<dbReference type="EMBL" id="CP000387">
    <property type="protein sequence ID" value="ABN44835.1"/>
    <property type="molecule type" value="Genomic_DNA"/>
</dbReference>
<dbReference type="RefSeq" id="WP_002906295.1">
    <property type="nucleotide sequence ID" value="NC_009009.1"/>
</dbReference>
<dbReference type="RefSeq" id="YP_001035385.1">
    <property type="nucleotide sequence ID" value="NC_009009.1"/>
</dbReference>
<dbReference type="SMR" id="A3CNT0"/>
<dbReference type="STRING" id="388919.SSA_1442"/>
<dbReference type="KEGG" id="ssa:SSA_1442"/>
<dbReference type="PATRIC" id="fig|388919.9.peg.1367"/>
<dbReference type="eggNOG" id="COG0107">
    <property type="taxonomic scope" value="Bacteria"/>
</dbReference>
<dbReference type="HOGENOM" id="CLU_048577_4_0_9"/>
<dbReference type="OrthoDB" id="9781903at2"/>
<dbReference type="UniPathway" id="UPA00031">
    <property type="reaction ID" value="UER00010"/>
</dbReference>
<dbReference type="Proteomes" id="UP000002148">
    <property type="component" value="Chromosome"/>
</dbReference>
<dbReference type="GO" id="GO:0005737">
    <property type="term" value="C:cytoplasm"/>
    <property type="evidence" value="ECO:0007669"/>
    <property type="project" value="UniProtKB-SubCell"/>
</dbReference>
<dbReference type="GO" id="GO:0000107">
    <property type="term" value="F:imidazoleglycerol-phosphate synthase activity"/>
    <property type="evidence" value="ECO:0007669"/>
    <property type="project" value="UniProtKB-UniRule"/>
</dbReference>
<dbReference type="GO" id="GO:0016829">
    <property type="term" value="F:lyase activity"/>
    <property type="evidence" value="ECO:0007669"/>
    <property type="project" value="UniProtKB-KW"/>
</dbReference>
<dbReference type="GO" id="GO:0000105">
    <property type="term" value="P:L-histidine biosynthetic process"/>
    <property type="evidence" value="ECO:0007669"/>
    <property type="project" value="UniProtKB-UniRule"/>
</dbReference>
<dbReference type="CDD" id="cd04731">
    <property type="entry name" value="HisF"/>
    <property type="match status" value="1"/>
</dbReference>
<dbReference type="FunFam" id="3.20.20.70:FF:000006">
    <property type="entry name" value="Imidazole glycerol phosphate synthase subunit HisF"/>
    <property type="match status" value="1"/>
</dbReference>
<dbReference type="Gene3D" id="3.20.20.70">
    <property type="entry name" value="Aldolase class I"/>
    <property type="match status" value="1"/>
</dbReference>
<dbReference type="HAMAP" id="MF_01013">
    <property type="entry name" value="HisF"/>
    <property type="match status" value="1"/>
</dbReference>
<dbReference type="InterPro" id="IPR013785">
    <property type="entry name" value="Aldolase_TIM"/>
</dbReference>
<dbReference type="InterPro" id="IPR006062">
    <property type="entry name" value="His_biosynth"/>
</dbReference>
<dbReference type="InterPro" id="IPR004651">
    <property type="entry name" value="HisF"/>
</dbReference>
<dbReference type="InterPro" id="IPR050064">
    <property type="entry name" value="IGPS_HisA/HisF"/>
</dbReference>
<dbReference type="InterPro" id="IPR011060">
    <property type="entry name" value="RibuloseP-bd_barrel"/>
</dbReference>
<dbReference type="NCBIfam" id="TIGR00735">
    <property type="entry name" value="hisF"/>
    <property type="match status" value="1"/>
</dbReference>
<dbReference type="PANTHER" id="PTHR21235:SF2">
    <property type="entry name" value="IMIDAZOLE GLYCEROL PHOSPHATE SYNTHASE HISHF"/>
    <property type="match status" value="1"/>
</dbReference>
<dbReference type="PANTHER" id="PTHR21235">
    <property type="entry name" value="IMIDAZOLE GLYCEROL PHOSPHATE SYNTHASE SUBUNIT HISF/H IGP SYNTHASE SUBUNIT HISF/H"/>
    <property type="match status" value="1"/>
</dbReference>
<dbReference type="Pfam" id="PF00977">
    <property type="entry name" value="His_biosynth"/>
    <property type="match status" value="1"/>
</dbReference>
<dbReference type="SUPFAM" id="SSF51366">
    <property type="entry name" value="Ribulose-phoshate binding barrel"/>
    <property type="match status" value="1"/>
</dbReference>